<keyword id="KW-0963">Cytoplasm</keyword>
<keyword id="KW-0227">DNA damage</keyword>
<keyword id="KW-0233">DNA recombination</keyword>
<keyword id="KW-0234">DNA repair</keyword>
<keyword id="KW-0255">Endonuclease</keyword>
<keyword id="KW-0378">Hydrolase</keyword>
<keyword id="KW-0460">Magnesium</keyword>
<keyword id="KW-0479">Metal-binding</keyword>
<keyword id="KW-0540">Nuclease</keyword>
<keyword id="KW-1185">Reference proteome</keyword>
<comment type="function">
    <text evidence="1">Endonuclease that resolves Holliday junction intermediates in genetic recombination. Cleaves mobile four-strand junctions by introducing symmetrical nicks in paired strands. Promotes annealing of linear ssDNA with homologous dsDNA. Required for DNA repair, homologous recombination and chromosome segregation.</text>
</comment>
<comment type="catalytic activity">
    <reaction evidence="1">
        <text>Endonucleolytic cleavage at a junction such as a reciprocal single-stranded crossover between two homologous DNA duplexes (Holliday junction).</text>
        <dbReference type="EC" id="3.1.21.10"/>
    </reaction>
</comment>
<comment type="cofactor">
    <cofactor evidence="1">
        <name>Mg(2+)</name>
        <dbReference type="ChEBI" id="CHEBI:18420"/>
    </cofactor>
    <text evidence="1">Binds 1 Mg(2+) ion per subunit.</text>
</comment>
<comment type="subcellular location">
    <subcellularLocation>
        <location evidence="1">Cytoplasm</location>
    </subcellularLocation>
</comment>
<comment type="similarity">
    <text evidence="1">Belongs to the RecU family.</text>
</comment>
<feature type="chain" id="PRO_1000016716" description="Holliday junction resolvase RecU">
    <location>
        <begin position="1"/>
        <end position="200"/>
    </location>
</feature>
<feature type="region of interest" description="Disordered" evidence="2">
    <location>
        <begin position="1"/>
        <end position="25"/>
    </location>
</feature>
<feature type="binding site" evidence="1">
    <location>
        <position position="85"/>
    </location>
    <ligand>
        <name>Mg(2+)</name>
        <dbReference type="ChEBI" id="CHEBI:18420"/>
    </ligand>
</feature>
<feature type="binding site" evidence="1">
    <location>
        <position position="87"/>
    </location>
    <ligand>
        <name>Mg(2+)</name>
        <dbReference type="ChEBI" id="CHEBI:18420"/>
    </ligand>
</feature>
<feature type="binding site" evidence="1">
    <location>
        <position position="100"/>
    </location>
    <ligand>
        <name>Mg(2+)</name>
        <dbReference type="ChEBI" id="CHEBI:18420"/>
    </ligand>
</feature>
<feature type="binding site" evidence="1">
    <location>
        <position position="119"/>
    </location>
    <ligand>
        <name>Mg(2+)</name>
        <dbReference type="ChEBI" id="CHEBI:18420"/>
    </ligand>
</feature>
<feature type="site" description="Transition state stabilizer" evidence="1">
    <location>
        <position position="102"/>
    </location>
</feature>
<dbReference type="EC" id="3.1.21.10" evidence="1"/>
<dbReference type="EMBL" id="AE016879">
    <property type="protein sequence ID" value="AAP25509.1"/>
    <property type="molecule type" value="Genomic_DNA"/>
</dbReference>
<dbReference type="EMBL" id="AE017334">
    <property type="protein sequence ID" value="AAT30671.1"/>
    <property type="molecule type" value="Genomic_DNA"/>
</dbReference>
<dbReference type="EMBL" id="AE017225">
    <property type="protein sequence ID" value="AAT53779.1"/>
    <property type="molecule type" value="Genomic_DNA"/>
</dbReference>
<dbReference type="RefSeq" id="NP_844023.1">
    <property type="nucleotide sequence ID" value="NC_003997.3"/>
</dbReference>
<dbReference type="RefSeq" id="WP_000155594.1">
    <property type="nucleotide sequence ID" value="NZ_WXXJ01000001.1"/>
</dbReference>
<dbReference type="RefSeq" id="YP_027728.1">
    <property type="nucleotide sequence ID" value="NC_005945.1"/>
</dbReference>
<dbReference type="SMR" id="Q81SS2"/>
<dbReference type="STRING" id="261594.GBAA_1573"/>
<dbReference type="DNASU" id="1086467"/>
<dbReference type="GeneID" id="45021545"/>
<dbReference type="KEGG" id="ban:BA_1573"/>
<dbReference type="KEGG" id="bar:GBAA_1573"/>
<dbReference type="KEGG" id="bat:BAS1459"/>
<dbReference type="PATRIC" id="fig|198094.11.peg.1543"/>
<dbReference type="eggNOG" id="COG3331">
    <property type="taxonomic scope" value="Bacteria"/>
</dbReference>
<dbReference type="HOGENOM" id="CLU_096340_0_0_9"/>
<dbReference type="OMA" id="VHYPKRS"/>
<dbReference type="OrthoDB" id="9783592at2"/>
<dbReference type="Proteomes" id="UP000000427">
    <property type="component" value="Chromosome"/>
</dbReference>
<dbReference type="Proteomes" id="UP000000594">
    <property type="component" value="Chromosome"/>
</dbReference>
<dbReference type="GO" id="GO:0005737">
    <property type="term" value="C:cytoplasm"/>
    <property type="evidence" value="ECO:0007669"/>
    <property type="project" value="UniProtKB-SubCell"/>
</dbReference>
<dbReference type="GO" id="GO:0004519">
    <property type="term" value="F:endonuclease activity"/>
    <property type="evidence" value="ECO:0007669"/>
    <property type="project" value="UniProtKB-UniRule"/>
</dbReference>
<dbReference type="GO" id="GO:0000287">
    <property type="term" value="F:magnesium ion binding"/>
    <property type="evidence" value="ECO:0007669"/>
    <property type="project" value="UniProtKB-UniRule"/>
</dbReference>
<dbReference type="GO" id="GO:0003676">
    <property type="term" value="F:nucleic acid binding"/>
    <property type="evidence" value="ECO:0007669"/>
    <property type="project" value="InterPro"/>
</dbReference>
<dbReference type="GO" id="GO:0007059">
    <property type="term" value="P:chromosome segregation"/>
    <property type="evidence" value="ECO:0007669"/>
    <property type="project" value="UniProtKB-UniRule"/>
</dbReference>
<dbReference type="GO" id="GO:0006310">
    <property type="term" value="P:DNA recombination"/>
    <property type="evidence" value="ECO:0007669"/>
    <property type="project" value="UniProtKB-UniRule"/>
</dbReference>
<dbReference type="GO" id="GO:0006281">
    <property type="term" value="P:DNA repair"/>
    <property type="evidence" value="ECO:0007669"/>
    <property type="project" value="UniProtKB-UniRule"/>
</dbReference>
<dbReference type="CDD" id="cd22354">
    <property type="entry name" value="RecU-like"/>
    <property type="match status" value="1"/>
</dbReference>
<dbReference type="Gene3D" id="3.40.1350.10">
    <property type="match status" value="1"/>
</dbReference>
<dbReference type="HAMAP" id="MF_00130">
    <property type="entry name" value="RecU"/>
    <property type="match status" value="1"/>
</dbReference>
<dbReference type="InterPro" id="IPR004612">
    <property type="entry name" value="Resolv_RecU"/>
</dbReference>
<dbReference type="InterPro" id="IPR011335">
    <property type="entry name" value="Restrct_endonuc-II-like"/>
</dbReference>
<dbReference type="InterPro" id="IPR011856">
    <property type="entry name" value="tRNA_endonuc-like_dom_sf"/>
</dbReference>
<dbReference type="NCBIfam" id="NF002581">
    <property type="entry name" value="PRK02234.1-2"/>
    <property type="match status" value="1"/>
</dbReference>
<dbReference type="NCBIfam" id="NF002584">
    <property type="entry name" value="PRK02234.1-5"/>
    <property type="match status" value="1"/>
</dbReference>
<dbReference type="NCBIfam" id="NF002585">
    <property type="entry name" value="PRK02234.1-6"/>
    <property type="match status" value="1"/>
</dbReference>
<dbReference type="NCBIfam" id="TIGR00648">
    <property type="entry name" value="recU"/>
    <property type="match status" value="1"/>
</dbReference>
<dbReference type="Pfam" id="PF03838">
    <property type="entry name" value="RecU"/>
    <property type="match status" value="1"/>
</dbReference>
<dbReference type="PIRSF" id="PIRSF037785">
    <property type="entry name" value="RecU"/>
    <property type="match status" value="1"/>
</dbReference>
<dbReference type="SUPFAM" id="SSF52980">
    <property type="entry name" value="Restriction endonuclease-like"/>
    <property type="match status" value="1"/>
</dbReference>
<gene>
    <name evidence="1" type="primary">recU</name>
    <name type="ordered locus">BA_1573</name>
    <name type="ordered locus">GBAA_1573</name>
    <name type="ordered locus">BAS1459</name>
</gene>
<sequence>MTIRYPNGKRYNQASQPHKTPIKKHTYSNRGMSLEEELNETNEYYLTHNIACVHKKPTPLQIVKVDYPARSAAVVKEAYFKQPSTTDYNGVYKGKYIDFEAKETKNKTSFPLQNFHLHQIEHMKQVIAHNGIAFVIIKFTLFDELYLLDAKHIITFWNRQNTGGRKSITKEEIVEHGSLLSCGYHPRIDYIRVLDTVYFS</sequence>
<accession>Q81SS2</accession>
<accession>Q6I103</accession>
<accession>Q6KUV7</accession>
<reference key="1">
    <citation type="journal article" date="2003" name="Nature">
        <title>The genome sequence of Bacillus anthracis Ames and comparison to closely related bacteria.</title>
        <authorList>
            <person name="Read T.D."/>
            <person name="Peterson S.N."/>
            <person name="Tourasse N.J."/>
            <person name="Baillie L.W."/>
            <person name="Paulsen I.T."/>
            <person name="Nelson K.E."/>
            <person name="Tettelin H."/>
            <person name="Fouts D.E."/>
            <person name="Eisen J.A."/>
            <person name="Gill S.R."/>
            <person name="Holtzapple E.K."/>
            <person name="Okstad O.A."/>
            <person name="Helgason E."/>
            <person name="Rilstone J."/>
            <person name="Wu M."/>
            <person name="Kolonay J.F."/>
            <person name="Beanan M.J."/>
            <person name="Dodson R.J."/>
            <person name="Brinkac L.M."/>
            <person name="Gwinn M.L."/>
            <person name="DeBoy R.T."/>
            <person name="Madpu R."/>
            <person name="Daugherty S.C."/>
            <person name="Durkin A.S."/>
            <person name="Haft D.H."/>
            <person name="Nelson W.C."/>
            <person name="Peterson J.D."/>
            <person name="Pop M."/>
            <person name="Khouri H.M."/>
            <person name="Radune D."/>
            <person name="Benton J.L."/>
            <person name="Mahamoud Y."/>
            <person name="Jiang L."/>
            <person name="Hance I.R."/>
            <person name="Weidman J.F."/>
            <person name="Berry K.J."/>
            <person name="Plaut R.D."/>
            <person name="Wolf A.M."/>
            <person name="Watkins K.L."/>
            <person name="Nierman W.C."/>
            <person name="Hazen A."/>
            <person name="Cline R.T."/>
            <person name="Redmond C."/>
            <person name="Thwaite J.E."/>
            <person name="White O."/>
            <person name="Salzberg S.L."/>
            <person name="Thomason B."/>
            <person name="Friedlander A.M."/>
            <person name="Koehler T.M."/>
            <person name="Hanna P.C."/>
            <person name="Kolstoe A.-B."/>
            <person name="Fraser C.M."/>
        </authorList>
    </citation>
    <scope>NUCLEOTIDE SEQUENCE [LARGE SCALE GENOMIC DNA]</scope>
    <source>
        <strain>Ames / isolate Porton</strain>
    </source>
</reference>
<reference key="2">
    <citation type="submission" date="2004-01" db="EMBL/GenBank/DDBJ databases">
        <title>Complete genome sequence of Bacillus anthracis Sterne.</title>
        <authorList>
            <person name="Brettin T.S."/>
            <person name="Bruce D."/>
            <person name="Challacombe J.F."/>
            <person name="Gilna P."/>
            <person name="Han C."/>
            <person name="Hill K."/>
            <person name="Hitchcock P."/>
            <person name="Jackson P."/>
            <person name="Keim P."/>
            <person name="Longmire J."/>
            <person name="Lucas S."/>
            <person name="Okinaka R."/>
            <person name="Richardson P."/>
            <person name="Rubin E."/>
            <person name="Tice H."/>
        </authorList>
    </citation>
    <scope>NUCLEOTIDE SEQUENCE [LARGE SCALE GENOMIC DNA]</scope>
    <source>
        <strain>Sterne</strain>
    </source>
</reference>
<reference key="3">
    <citation type="journal article" date="2009" name="J. Bacteriol.">
        <title>The complete genome sequence of Bacillus anthracis Ames 'Ancestor'.</title>
        <authorList>
            <person name="Ravel J."/>
            <person name="Jiang L."/>
            <person name="Stanley S.T."/>
            <person name="Wilson M.R."/>
            <person name="Decker R.S."/>
            <person name="Read T.D."/>
            <person name="Worsham P."/>
            <person name="Keim P.S."/>
            <person name="Salzberg S.L."/>
            <person name="Fraser-Liggett C.M."/>
            <person name="Rasko D.A."/>
        </authorList>
    </citation>
    <scope>NUCLEOTIDE SEQUENCE [LARGE SCALE GENOMIC DNA]</scope>
    <source>
        <strain>Ames ancestor</strain>
    </source>
</reference>
<name>RECU_BACAN</name>
<organism>
    <name type="scientific">Bacillus anthracis</name>
    <dbReference type="NCBI Taxonomy" id="1392"/>
    <lineage>
        <taxon>Bacteria</taxon>
        <taxon>Bacillati</taxon>
        <taxon>Bacillota</taxon>
        <taxon>Bacilli</taxon>
        <taxon>Bacillales</taxon>
        <taxon>Bacillaceae</taxon>
        <taxon>Bacillus</taxon>
        <taxon>Bacillus cereus group</taxon>
    </lineage>
</organism>
<protein>
    <recommendedName>
        <fullName evidence="1">Holliday junction resolvase RecU</fullName>
        <ecNumber evidence="1">3.1.21.10</ecNumber>
    </recommendedName>
    <alternativeName>
        <fullName evidence="1">Recombination protein U homolog</fullName>
    </alternativeName>
</protein>
<proteinExistence type="inferred from homology"/>
<evidence type="ECO:0000255" key="1">
    <source>
        <dbReference type="HAMAP-Rule" id="MF_00130"/>
    </source>
</evidence>
<evidence type="ECO:0000256" key="2">
    <source>
        <dbReference type="SAM" id="MobiDB-lite"/>
    </source>
</evidence>